<feature type="chain" id="PRO_0000450352" description="16S rRNA aminocarboxypropyltransferase">
    <location>
        <begin position="1"/>
        <end position="185"/>
    </location>
</feature>
<feature type="binding site" evidence="2 6">
    <location>
        <position position="19"/>
    </location>
    <ligand>
        <name>S-adenosyl-L-methionine</name>
        <dbReference type="ChEBI" id="CHEBI:59789"/>
    </ligand>
</feature>
<feature type="binding site" evidence="2 6">
    <location>
        <position position="69"/>
    </location>
    <ligand>
        <name>S-adenosyl-L-methionine</name>
        <dbReference type="ChEBI" id="CHEBI:59789"/>
    </ligand>
</feature>
<feature type="binding site" evidence="2 6">
    <location>
        <position position="93"/>
    </location>
    <ligand>
        <name>S-adenosyl-L-methionine</name>
        <dbReference type="ChEBI" id="CHEBI:59789"/>
    </ligand>
</feature>
<feature type="binding site" evidence="2 6">
    <location>
        <position position="108"/>
    </location>
    <ligand>
        <name>S-adenosyl-L-methionine</name>
        <dbReference type="ChEBI" id="CHEBI:59789"/>
    </ligand>
</feature>
<feature type="binding site" evidence="2 6">
    <location>
        <position position="112"/>
    </location>
    <ligand>
        <name>S-adenosyl-L-methionine</name>
        <dbReference type="ChEBI" id="CHEBI:59789"/>
    </ligand>
</feature>
<feature type="strand" evidence="7">
    <location>
        <begin position="5"/>
        <end position="9"/>
    </location>
</feature>
<feature type="helix" evidence="7">
    <location>
        <begin position="19"/>
        <end position="25"/>
    </location>
</feature>
<feature type="strand" evidence="7">
    <location>
        <begin position="28"/>
        <end position="34"/>
    </location>
</feature>
<feature type="helix" evidence="7">
    <location>
        <begin position="35"/>
        <end position="37"/>
    </location>
</feature>
<feature type="strand" evidence="7">
    <location>
        <begin position="42"/>
        <end position="45"/>
    </location>
</feature>
<feature type="helix" evidence="7">
    <location>
        <begin position="55"/>
        <end position="57"/>
    </location>
</feature>
<feature type="helix" evidence="7">
    <location>
        <begin position="58"/>
        <end position="63"/>
    </location>
</feature>
<feature type="strand" evidence="7">
    <location>
        <begin position="66"/>
        <end position="70"/>
    </location>
</feature>
<feature type="helix" evidence="7">
    <location>
        <begin position="73"/>
        <end position="83"/>
    </location>
</feature>
<feature type="strand" evidence="7">
    <location>
        <begin position="86"/>
        <end position="92"/>
    </location>
</feature>
<feature type="turn" evidence="7">
    <location>
        <begin position="101"/>
        <end position="105"/>
    </location>
</feature>
<feature type="helix" evidence="7">
    <location>
        <begin position="112"/>
        <end position="122"/>
    </location>
</feature>
<feature type="helix" evidence="7">
    <location>
        <begin position="126"/>
        <end position="133"/>
    </location>
</feature>
<feature type="helix" evidence="7">
    <location>
        <begin position="141"/>
        <end position="153"/>
    </location>
</feature>
<feature type="turn" evidence="7">
    <location>
        <begin position="154"/>
        <end position="156"/>
    </location>
</feature>
<feature type="helix" evidence="7">
    <location>
        <begin position="160"/>
        <end position="165"/>
    </location>
</feature>
<feature type="helix" evidence="7">
    <location>
        <begin position="170"/>
        <end position="182"/>
    </location>
</feature>
<dbReference type="EC" id="2.5.1.157" evidence="1"/>
<dbReference type="EMBL" id="CP002100">
    <property type="protein sequence ID" value="ADN49819.1"/>
    <property type="molecule type" value="Genomic_DNA"/>
</dbReference>
<dbReference type="RefSeq" id="WP_013335544.1">
    <property type="nucleotide sequence ID" value="NC_014537.1"/>
</dbReference>
<dbReference type="PDB" id="5APG">
    <property type="method" value="X-ray"/>
    <property type="resolution" value="1.60 A"/>
    <property type="chains" value="A/B/C=1-185"/>
</dbReference>
<dbReference type="PDBsum" id="5APG"/>
<dbReference type="SMR" id="E1QU22"/>
<dbReference type="STRING" id="572478.Vdis_0418"/>
<dbReference type="GeneID" id="9751336"/>
<dbReference type="KEGG" id="vdi:Vdis_0418"/>
<dbReference type="eggNOG" id="arCOG04733">
    <property type="taxonomic scope" value="Archaea"/>
</dbReference>
<dbReference type="HOGENOM" id="CLU_035060_4_2_2"/>
<dbReference type="Proteomes" id="UP000006681">
    <property type="component" value="Chromosome"/>
</dbReference>
<dbReference type="GO" id="GO:0005737">
    <property type="term" value="C:cytoplasm"/>
    <property type="evidence" value="ECO:0007669"/>
    <property type="project" value="UniProtKB-SubCell"/>
</dbReference>
<dbReference type="GO" id="GO:0106388">
    <property type="term" value="F:18S rRNA aminocarboxypropyltransferase activity"/>
    <property type="evidence" value="ECO:0007669"/>
    <property type="project" value="InterPro"/>
</dbReference>
<dbReference type="GO" id="GO:1904047">
    <property type="term" value="F:S-adenosyl-L-methionine binding"/>
    <property type="evidence" value="ECO:0000314"/>
    <property type="project" value="UniProtKB"/>
</dbReference>
<dbReference type="GO" id="GO:0000455">
    <property type="term" value="P:enzyme-directed rRNA pseudouridine synthesis"/>
    <property type="evidence" value="ECO:0007669"/>
    <property type="project" value="UniProtKB-UniRule"/>
</dbReference>
<dbReference type="HAMAP" id="MF_01116">
    <property type="entry name" value="TSR3"/>
    <property type="match status" value="1"/>
</dbReference>
<dbReference type="InterPro" id="IPR022968">
    <property type="entry name" value="Tsr3-like"/>
</dbReference>
<dbReference type="InterPro" id="IPR007177">
    <property type="entry name" value="Tsr3_C"/>
</dbReference>
<dbReference type="NCBIfam" id="NF002621">
    <property type="entry name" value="PRK02287.1"/>
    <property type="match status" value="1"/>
</dbReference>
<dbReference type="PANTHER" id="PTHR20426:SF0">
    <property type="entry name" value="18S RRNA AMINOCARBOXYPROPYLTRANSFERASE"/>
    <property type="match status" value="1"/>
</dbReference>
<dbReference type="PANTHER" id="PTHR20426">
    <property type="entry name" value="RIBOSOME BIOGENESIS PROTEIN TSR3 HOMOLOG"/>
    <property type="match status" value="1"/>
</dbReference>
<dbReference type="Pfam" id="PF04034">
    <property type="entry name" value="Ribo_biogen_C"/>
    <property type="match status" value="1"/>
</dbReference>
<comment type="function">
    <text evidence="1">Aminocarboxypropyltransferase that catalyzes the aminocarboxypropyl transfer on pseudouridine corresponding to position 914 in M.jannaschii 16S rRNA. It constitutes the last step in biosynthesis of the hypermodified N1-methyl-N3-(3-amino-3-carboxypropyl) pseudouridine (m1acp3-Psi).</text>
</comment>
<comment type="catalytic activity">
    <reaction evidence="1">
        <text>an N(1)-methylpseudouridine in rRNA + S-adenosyl-L-methionine = N(1)-methyl-N(3)-[(3S)-3-amino-3-carboxypropyl]pseudouridine in rRNA + S-methyl-5'-thioadenosine + H(+)</text>
        <dbReference type="Rhea" id="RHEA:63296"/>
        <dbReference type="Rhea" id="RHEA-COMP:11634"/>
        <dbReference type="Rhea" id="RHEA-COMP:16310"/>
        <dbReference type="ChEBI" id="CHEBI:15378"/>
        <dbReference type="ChEBI" id="CHEBI:17509"/>
        <dbReference type="ChEBI" id="CHEBI:59789"/>
        <dbReference type="ChEBI" id="CHEBI:74890"/>
        <dbReference type="ChEBI" id="CHEBI:146234"/>
        <dbReference type="EC" id="2.5.1.157"/>
    </reaction>
</comment>
<comment type="subcellular location">
    <subcellularLocation>
        <location evidence="1">Cytoplasm</location>
    </subcellularLocation>
</comment>
<comment type="similarity">
    <text evidence="1 4">Belongs to the TDD superfamily. TSR3 family.</text>
</comment>
<name>TSR3_VULDI</name>
<keyword id="KW-0002">3D-structure</keyword>
<keyword id="KW-0963">Cytoplasm</keyword>
<keyword id="KW-1185">Reference proteome</keyword>
<keyword id="KW-0690">Ribosome biogenesis</keyword>
<keyword id="KW-0698">rRNA processing</keyword>
<keyword id="KW-0949">S-adenosyl-L-methionine</keyword>
<keyword id="KW-0808">Transferase</keyword>
<gene>
    <name evidence="5" type="ordered locus">Vdis_0418</name>
</gene>
<proteinExistence type="evidence at protein level"/>
<protein>
    <recommendedName>
        <fullName evidence="1 4">16S rRNA aminocarboxypropyltransferase</fullName>
        <ecNumber evidence="1">2.5.1.157</ecNumber>
    </recommendedName>
    <alternativeName>
        <fullName evidence="3">20S S rRNA accumulation protein 3 homolog</fullName>
        <shortName evidence="3">VdTsr3</shortName>
    </alternativeName>
</protein>
<sequence>MIPRVFIYRLPQDDPRKNTAIKLVRFGFAQLVDSIKALPSGSIILDPTVKTPLTPSDRVIAESRGLSLIDCSWKRAVDVHTKFIRGKFIRRRLPLLIAANPTHYGKPYILSTIEAVAAALYIMGFKDEAMEVLRLYKWGPNFIIINQKYLERYAAGDLSPERELLGVDDVDNGLEQLMRVLTNGD</sequence>
<reference key="1">
    <citation type="journal article" date="2010" name="Stand. Genomic Sci.">
        <title>Complete genome sequence of Vulcanisaeta distributa type strain (IC-017).</title>
        <authorList>
            <person name="Mavromatis K."/>
            <person name="Sikorski J."/>
            <person name="Pabst E."/>
            <person name="Teshima H."/>
            <person name="Lapidus A."/>
            <person name="Lucas S."/>
            <person name="Nolan M."/>
            <person name="Glavina Del Rio T."/>
            <person name="Cheng J.F."/>
            <person name="Bruce D."/>
            <person name="Goodwin L."/>
            <person name="Pitluck S."/>
            <person name="Liolios K."/>
            <person name="Ivanova N."/>
            <person name="Mikhailova N."/>
            <person name="Pati A."/>
            <person name="Chen A."/>
            <person name="Palaniappan K."/>
            <person name="Land M."/>
            <person name="Hauser L."/>
            <person name="Chang Y.J."/>
            <person name="Jeffries C.D."/>
            <person name="Rohde M."/>
            <person name="Spring S."/>
            <person name="Goeker M."/>
            <person name="Wirth R."/>
            <person name="Woyke T."/>
            <person name="Bristow J."/>
            <person name="Eisen J.A."/>
            <person name="Markowitz V."/>
            <person name="Hugenholtz P."/>
            <person name="Klenk H.P."/>
            <person name="Kyrpides N.C."/>
        </authorList>
    </citation>
    <scope>NUCLEOTIDE SEQUENCE [LARGE SCALE GENOMIC DNA]</scope>
    <source>
        <strain>DSM 14429 / JCM 11212 / NBRC 100878 / IC-017</strain>
    </source>
</reference>
<reference evidence="6" key="2">
    <citation type="journal article" date="2016" name="Nucleic Acids Res.">
        <title>Ribosome biogenesis factor Tsr3 is the aminocarboxypropyl transferase responsible for 18S rRNA hypermodification in yeast and humans.</title>
        <authorList>
            <person name="Meyer B."/>
            <person name="Wurm J.P."/>
            <person name="Sharma S."/>
            <person name="Immer C."/>
            <person name="Pogoryelov D."/>
            <person name="Koetter P."/>
            <person name="Lafontaine D.L."/>
            <person name="Woehnert J."/>
            <person name="Entian K.D."/>
        </authorList>
    </citation>
    <scope>X-RAY CRYSTALLOGRAPHY (1.60 ANGSTROMS) IN COMPLEX WITH S-ADENOSYL-L-METHIONINE</scope>
</reference>
<accession>E1QU22</accession>
<organism>
    <name type="scientific">Vulcanisaeta distributa (strain DSM 14429 / JCM 11212 / NBRC 100878 / IC-017)</name>
    <dbReference type="NCBI Taxonomy" id="572478"/>
    <lineage>
        <taxon>Archaea</taxon>
        <taxon>Thermoproteota</taxon>
        <taxon>Thermoprotei</taxon>
        <taxon>Thermoproteales</taxon>
        <taxon>Thermoproteaceae</taxon>
        <taxon>Vulcanisaeta</taxon>
    </lineage>
</organism>
<evidence type="ECO:0000255" key="1">
    <source>
        <dbReference type="HAMAP-Rule" id="MF_01116"/>
    </source>
</evidence>
<evidence type="ECO:0000269" key="2">
    <source>
    </source>
</evidence>
<evidence type="ECO:0000303" key="3">
    <source>
    </source>
</evidence>
<evidence type="ECO:0000305" key="4"/>
<evidence type="ECO:0000312" key="5">
    <source>
        <dbReference type="EMBL" id="ADN49819.1"/>
    </source>
</evidence>
<evidence type="ECO:0007744" key="6">
    <source>
        <dbReference type="PDB" id="5APG"/>
    </source>
</evidence>
<evidence type="ECO:0007829" key="7">
    <source>
        <dbReference type="PDB" id="5APG"/>
    </source>
</evidence>